<accession>P07522</accession>
<accession>Q63183</accession>
<organism>
    <name type="scientific">Rattus norvegicus</name>
    <name type="common">Rat</name>
    <dbReference type="NCBI Taxonomy" id="10116"/>
    <lineage>
        <taxon>Eukaryota</taxon>
        <taxon>Metazoa</taxon>
        <taxon>Chordata</taxon>
        <taxon>Craniata</taxon>
        <taxon>Vertebrata</taxon>
        <taxon>Euteleostomi</taxon>
        <taxon>Mammalia</taxon>
        <taxon>Eutheria</taxon>
        <taxon>Euarchontoglires</taxon>
        <taxon>Glires</taxon>
        <taxon>Rodentia</taxon>
        <taxon>Myomorpha</taxon>
        <taxon>Muroidea</taxon>
        <taxon>Muridae</taxon>
        <taxon>Murinae</taxon>
        <taxon>Rattus</taxon>
    </lineage>
</organism>
<evidence type="ECO:0000250" key="1"/>
<evidence type="ECO:0000255" key="2"/>
<evidence type="ECO:0000255" key="3">
    <source>
        <dbReference type="PROSITE-ProRule" id="PRU00076"/>
    </source>
</evidence>
<evidence type="ECO:0000256" key="4">
    <source>
        <dbReference type="SAM" id="MobiDB-lite"/>
    </source>
</evidence>
<evidence type="ECO:0000305" key="5"/>
<name>EGF_RAT</name>
<gene>
    <name type="primary">Egf</name>
</gene>
<keyword id="KW-0903">Direct protein sequencing</keyword>
<keyword id="KW-1015">Disulfide bond</keyword>
<keyword id="KW-0245">EGF-like domain</keyword>
<keyword id="KW-0325">Glycoprotein</keyword>
<keyword id="KW-0339">Growth factor</keyword>
<keyword id="KW-0472">Membrane</keyword>
<keyword id="KW-1185">Reference proteome</keyword>
<keyword id="KW-0677">Repeat</keyword>
<keyword id="KW-0732">Signal</keyword>
<keyword id="KW-0812">Transmembrane</keyword>
<keyword id="KW-1133">Transmembrane helix</keyword>
<dbReference type="EMBL" id="U04842">
    <property type="protein sequence ID" value="AAB60436.1"/>
    <property type="molecule type" value="mRNA"/>
</dbReference>
<dbReference type="EMBL" id="X12748">
    <property type="protein sequence ID" value="CAA31241.1"/>
    <property type="molecule type" value="mRNA"/>
</dbReference>
<dbReference type="PIR" id="I52995">
    <property type="entry name" value="EGRT"/>
</dbReference>
<dbReference type="RefSeq" id="NP_036974.1">
    <property type="nucleotide sequence ID" value="NM_012842.1"/>
</dbReference>
<dbReference type="SMR" id="P07522"/>
<dbReference type="FunCoup" id="P07522">
    <property type="interactions" value="643"/>
</dbReference>
<dbReference type="STRING" id="10116.ENSRNOP00000075379"/>
<dbReference type="BindingDB" id="P07522"/>
<dbReference type="GlyCosmos" id="P07522">
    <property type="glycosylation" value="6 sites, No reported glycans"/>
</dbReference>
<dbReference type="GlyGen" id="P07522">
    <property type="glycosylation" value="6 sites"/>
</dbReference>
<dbReference type="iPTMnet" id="P07522"/>
<dbReference type="PhosphoSitePlus" id="P07522"/>
<dbReference type="PaxDb" id="10116-ENSRNOP00000066558"/>
<dbReference type="GeneID" id="25313"/>
<dbReference type="KEGG" id="rno:25313"/>
<dbReference type="UCSC" id="RGD:2542">
    <property type="organism name" value="rat"/>
</dbReference>
<dbReference type="AGR" id="RGD:2542"/>
<dbReference type="CTD" id="1950"/>
<dbReference type="RGD" id="2542">
    <property type="gene designation" value="Egf"/>
</dbReference>
<dbReference type="eggNOG" id="KOG1215">
    <property type="taxonomic scope" value="Eukaryota"/>
</dbReference>
<dbReference type="InParanoid" id="P07522"/>
<dbReference type="PhylomeDB" id="P07522"/>
<dbReference type="Reactome" id="R-RNO-114608">
    <property type="pathway name" value="Platelet degranulation"/>
</dbReference>
<dbReference type="Reactome" id="R-RNO-1227986">
    <property type="pathway name" value="Signaling by ERBB2"/>
</dbReference>
<dbReference type="Reactome" id="R-RNO-1236394">
    <property type="pathway name" value="Signaling by ERBB4"/>
</dbReference>
<dbReference type="Reactome" id="R-RNO-1250196">
    <property type="pathway name" value="SHC1 events in ERBB2 signaling"/>
</dbReference>
<dbReference type="Reactome" id="R-RNO-1257604">
    <property type="pathway name" value="PIP3 activates AKT signaling"/>
</dbReference>
<dbReference type="Reactome" id="R-RNO-177929">
    <property type="pathway name" value="Signaling by EGFR"/>
</dbReference>
<dbReference type="Reactome" id="R-RNO-179812">
    <property type="pathway name" value="GRB2 events in EGFR signaling"/>
</dbReference>
<dbReference type="Reactome" id="R-RNO-180292">
    <property type="pathway name" value="GAB1 signalosome"/>
</dbReference>
<dbReference type="Reactome" id="R-RNO-180336">
    <property type="pathway name" value="SHC1 events in EGFR signaling"/>
</dbReference>
<dbReference type="Reactome" id="R-RNO-182971">
    <property type="pathway name" value="EGFR downregulation"/>
</dbReference>
<dbReference type="Reactome" id="R-RNO-1963642">
    <property type="pathway name" value="PI3K events in ERBB2 signaling"/>
</dbReference>
<dbReference type="Reactome" id="R-RNO-212718">
    <property type="pathway name" value="EGFR interacts with phospholipase C-gamma"/>
</dbReference>
<dbReference type="Reactome" id="R-RNO-5673001">
    <property type="pathway name" value="RAF/MAP kinase cascade"/>
</dbReference>
<dbReference type="Reactome" id="R-RNO-6785631">
    <property type="pathway name" value="ERBB2 Regulates Cell Motility"/>
</dbReference>
<dbReference type="Reactome" id="R-RNO-6811558">
    <property type="pathway name" value="PI5P, PP2A and IER3 Regulate PI3K/AKT Signaling"/>
</dbReference>
<dbReference type="Reactome" id="R-RNO-8847993">
    <property type="pathway name" value="ERBB2 Activates PTK6 Signaling"/>
</dbReference>
<dbReference type="Reactome" id="R-RNO-8856825">
    <property type="pathway name" value="Cargo recognition for clathrin-mediated endocytosis"/>
</dbReference>
<dbReference type="Reactome" id="R-RNO-8856828">
    <property type="pathway name" value="Clathrin-mediated endocytosis"/>
</dbReference>
<dbReference type="Reactome" id="R-RNO-8863795">
    <property type="pathway name" value="Downregulation of ERBB2 signaling"/>
</dbReference>
<dbReference type="Reactome" id="R-RNO-9009391">
    <property type="pathway name" value="Extra-nuclear estrogen signaling"/>
</dbReference>
<dbReference type="Reactome" id="R-RNO-9013507">
    <property type="pathway name" value="NOTCH3 Activation and Transmission of Signal to the Nucleus"/>
</dbReference>
<dbReference type="PRO" id="PR:P07522"/>
<dbReference type="Proteomes" id="UP000002494">
    <property type="component" value="Unplaced"/>
</dbReference>
<dbReference type="GO" id="GO:0070062">
    <property type="term" value="C:extracellular exosome"/>
    <property type="evidence" value="ECO:0000266"/>
    <property type="project" value="RGD"/>
</dbReference>
<dbReference type="GO" id="GO:0005615">
    <property type="term" value="C:extracellular space"/>
    <property type="evidence" value="ECO:0000314"/>
    <property type="project" value="RGD"/>
</dbReference>
<dbReference type="GO" id="GO:0005886">
    <property type="term" value="C:plasma membrane"/>
    <property type="evidence" value="ECO:0000266"/>
    <property type="project" value="RGD"/>
</dbReference>
<dbReference type="GO" id="GO:0005509">
    <property type="term" value="F:calcium ion binding"/>
    <property type="evidence" value="ECO:0007669"/>
    <property type="project" value="InterPro"/>
</dbReference>
<dbReference type="GO" id="GO:0005154">
    <property type="term" value="F:epidermal growth factor receptor binding"/>
    <property type="evidence" value="ECO:0000314"/>
    <property type="project" value="RGD"/>
</dbReference>
<dbReference type="GO" id="GO:0008083">
    <property type="term" value="F:growth factor activity"/>
    <property type="evidence" value="ECO:0000266"/>
    <property type="project" value="RGD"/>
</dbReference>
<dbReference type="GO" id="GO:0005085">
    <property type="term" value="F:guanyl-nucleotide exchange factor activity"/>
    <property type="evidence" value="ECO:0000266"/>
    <property type="project" value="RGD"/>
</dbReference>
<dbReference type="GO" id="GO:0048018">
    <property type="term" value="F:receptor ligand activity"/>
    <property type="evidence" value="ECO:0000266"/>
    <property type="project" value="RGD"/>
</dbReference>
<dbReference type="GO" id="GO:0030297">
    <property type="term" value="F:transmembrane receptor protein tyrosine kinase activator activity"/>
    <property type="evidence" value="ECO:0000266"/>
    <property type="project" value="RGD"/>
</dbReference>
<dbReference type="GO" id="GO:0001525">
    <property type="term" value="P:angiogenesis"/>
    <property type="evidence" value="ECO:0000266"/>
    <property type="project" value="RGD"/>
</dbReference>
<dbReference type="GO" id="GO:0048754">
    <property type="term" value="P:branching morphogenesis of an epithelial tube"/>
    <property type="evidence" value="ECO:0000266"/>
    <property type="project" value="RGD"/>
</dbReference>
<dbReference type="GO" id="GO:0008283">
    <property type="term" value="P:cell population proliferation"/>
    <property type="evidence" value="ECO:0000266"/>
    <property type="project" value="RGD"/>
</dbReference>
<dbReference type="GO" id="GO:0021930">
    <property type="term" value="P:cerebellar granule cell precursor proliferation"/>
    <property type="evidence" value="ECO:0000266"/>
    <property type="project" value="RGD"/>
</dbReference>
<dbReference type="GO" id="GO:0007173">
    <property type="term" value="P:epidermal growth factor receptor signaling pathway"/>
    <property type="evidence" value="ECO:0000314"/>
    <property type="project" value="RGD"/>
</dbReference>
<dbReference type="GO" id="GO:0050673">
    <property type="term" value="P:epithelial cell proliferation"/>
    <property type="evidence" value="ECO:0000266"/>
    <property type="project" value="RGD"/>
</dbReference>
<dbReference type="GO" id="GO:0038134">
    <property type="term" value="P:ERBB2-EGFR signaling pathway"/>
    <property type="evidence" value="ECO:0000266"/>
    <property type="project" value="RGD"/>
</dbReference>
<dbReference type="GO" id="GO:0070371">
    <property type="term" value="P:ERK1 and ERK2 cascade"/>
    <property type="evidence" value="ECO:0000266"/>
    <property type="project" value="RGD"/>
</dbReference>
<dbReference type="GO" id="GO:0035556">
    <property type="term" value="P:intracellular signal transduction"/>
    <property type="evidence" value="ECO:0000304"/>
    <property type="project" value="RGD"/>
</dbReference>
<dbReference type="GO" id="GO:0001822">
    <property type="term" value="P:kidney development"/>
    <property type="evidence" value="ECO:0000270"/>
    <property type="project" value="RGD"/>
</dbReference>
<dbReference type="GO" id="GO:0060749">
    <property type="term" value="P:mammary gland alveolus development"/>
    <property type="evidence" value="ECO:0000266"/>
    <property type="project" value="RGD"/>
</dbReference>
<dbReference type="GO" id="GO:0090370">
    <property type="term" value="P:negative regulation of cholesterol efflux"/>
    <property type="evidence" value="ECO:0000266"/>
    <property type="project" value="RGD"/>
</dbReference>
<dbReference type="GO" id="GO:0051048">
    <property type="term" value="P:negative regulation of secretion"/>
    <property type="evidence" value="ECO:0000266"/>
    <property type="project" value="RGD"/>
</dbReference>
<dbReference type="GO" id="GO:0090263">
    <property type="term" value="P:positive regulation of canonical Wnt signaling pathway"/>
    <property type="evidence" value="ECO:0000266"/>
    <property type="project" value="RGD"/>
</dbReference>
<dbReference type="GO" id="GO:0030335">
    <property type="term" value="P:positive regulation of cell migration"/>
    <property type="evidence" value="ECO:0000266"/>
    <property type="project" value="RGD"/>
</dbReference>
<dbReference type="GO" id="GO:0008284">
    <property type="term" value="P:positive regulation of cell population proliferation"/>
    <property type="evidence" value="ECO:0000250"/>
    <property type="project" value="UniProtKB"/>
</dbReference>
<dbReference type="GO" id="GO:0021940">
    <property type="term" value="P:positive regulation of cerebellar granule cell precursor proliferation"/>
    <property type="evidence" value="ECO:0000266"/>
    <property type="project" value="RGD"/>
</dbReference>
<dbReference type="GO" id="GO:0043388">
    <property type="term" value="P:positive regulation of DNA binding"/>
    <property type="evidence" value="ECO:0000250"/>
    <property type="project" value="UniProtKB"/>
</dbReference>
<dbReference type="GO" id="GO:2000573">
    <property type="term" value="P:positive regulation of DNA biosynthetic process"/>
    <property type="evidence" value="ECO:0000314"/>
    <property type="project" value="RGD"/>
</dbReference>
<dbReference type="GO" id="GO:0045893">
    <property type="term" value="P:positive regulation of DNA-templated transcription"/>
    <property type="evidence" value="ECO:0000266"/>
    <property type="project" value="RGD"/>
</dbReference>
<dbReference type="GO" id="GO:0010595">
    <property type="term" value="P:positive regulation of endothelial cell migration"/>
    <property type="evidence" value="ECO:0000266"/>
    <property type="project" value="RGD"/>
</dbReference>
<dbReference type="GO" id="GO:0001938">
    <property type="term" value="P:positive regulation of endothelial cell proliferation"/>
    <property type="evidence" value="ECO:0000266"/>
    <property type="project" value="RGD"/>
</dbReference>
<dbReference type="GO" id="GO:0050679">
    <property type="term" value="P:positive regulation of epithelial cell proliferation"/>
    <property type="evidence" value="ECO:0000266"/>
    <property type="project" value="RGD"/>
</dbReference>
<dbReference type="GO" id="GO:1905278">
    <property type="term" value="P:positive regulation of epithelial tube formation"/>
    <property type="evidence" value="ECO:0000266"/>
    <property type="project" value="RGD"/>
</dbReference>
<dbReference type="GO" id="GO:0070374">
    <property type="term" value="P:positive regulation of ERK1 and ERK2 cascade"/>
    <property type="evidence" value="ECO:0000314"/>
    <property type="project" value="RGD"/>
</dbReference>
<dbReference type="GO" id="GO:0048146">
    <property type="term" value="P:positive regulation of fibroblast proliferation"/>
    <property type="evidence" value="ECO:0000314"/>
    <property type="project" value="RGD"/>
</dbReference>
<dbReference type="GO" id="GO:0010628">
    <property type="term" value="P:positive regulation of gene expression"/>
    <property type="evidence" value="ECO:0000266"/>
    <property type="project" value="RGD"/>
</dbReference>
<dbReference type="GO" id="GO:1900127">
    <property type="term" value="P:positive regulation of hyaluronan biosynthetic process"/>
    <property type="evidence" value="ECO:0000266"/>
    <property type="project" value="RGD"/>
</dbReference>
<dbReference type="GO" id="GO:0043410">
    <property type="term" value="P:positive regulation of MAPK cascade"/>
    <property type="evidence" value="ECO:0000250"/>
    <property type="project" value="UniProtKB"/>
</dbReference>
<dbReference type="GO" id="GO:0045840">
    <property type="term" value="P:positive regulation of mitotic nuclear division"/>
    <property type="evidence" value="ECO:0000266"/>
    <property type="project" value="RGD"/>
</dbReference>
<dbReference type="GO" id="GO:0051897">
    <property type="term" value="P:positive regulation of phosphatidylinositol 3-kinase/protein kinase B signal transduction"/>
    <property type="evidence" value="ECO:0000266"/>
    <property type="project" value="RGD"/>
</dbReference>
<dbReference type="GO" id="GO:0042327">
    <property type="term" value="P:positive regulation of phosphorylation"/>
    <property type="evidence" value="ECO:0000266"/>
    <property type="project" value="RGD"/>
</dbReference>
<dbReference type="GO" id="GO:1902966">
    <property type="term" value="P:positive regulation of protein localization to early endosome"/>
    <property type="evidence" value="ECO:0000266"/>
    <property type="project" value="RGD"/>
</dbReference>
<dbReference type="GO" id="GO:0002092">
    <property type="term" value="P:positive regulation of receptor internalization"/>
    <property type="evidence" value="ECO:0000266"/>
    <property type="project" value="RGD"/>
</dbReference>
<dbReference type="GO" id="GO:2000060">
    <property type="term" value="P:positive regulation of ubiquitin-dependent protein catabolic process"/>
    <property type="evidence" value="ECO:0000266"/>
    <property type="project" value="RGD"/>
</dbReference>
<dbReference type="GO" id="GO:0090279">
    <property type="term" value="P:regulation of calcium ion import"/>
    <property type="evidence" value="ECO:0000266"/>
    <property type="project" value="RGD"/>
</dbReference>
<dbReference type="GO" id="GO:2000008">
    <property type="term" value="P:regulation of protein localization to cell surface"/>
    <property type="evidence" value="ECO:0000266"/>
    <property type="project" value="RGD"/>
</dbReference>
<dbReference type="GO" id="GO:0051223">
    <property type="term" value="P:regulation of protein transport"/>
    <property type="evidence" value="ECO:0000314"/>
    <property type="project" value="MGI"/>
</dbReference>
<dbReference type="GO" id="GO:0046425">
    <property type="term" value="P:regulation of receptor signaling pathway via JAK-STAT"/>
    <property type="evidence" value="ECO:0000250"/>
    <property type="project" value="UniProtKB"/>
</dbReference>
<dbReference type="CDD" id="cd00054">
    <property type="entry name" value="EGF_CA"/>
    <property type="match status" value="3"/>
</dbReference>
<dbReference type="FunFam" id="2.10.25.10:FF:000010">
    <property type="entry name" value="Pro-epidermal growth factor"/>
    <property type="match status" value="1"/>
</dbReference>
<dbReference type="FunFam" id="2.10.25.10:FF:000219">
    <property type="entry name" value="Pro-epidermal growth factor"/>
    <property type="match status" value="1"/>
</dbReference>
<dbReference type="FunFam" id="2.10.25.10:FF:000254">
    <property type="entry name" value="Pro-epidermal growth factor"/>
    <property type="match status" value="1"/>
</dbReference>
<dbReference type="FunFam" id="2.10.25.10:FF:000362">
    <property type="entry name" value="Pro-epidermal growth factor"/>
    <property type="match status" value="1"/>
</dbReference>
<dbReference type="FunFam" id="2.10.25.10:FF:000896">
    <property type="entry name" value="Pro-epidermal growth factor"/>
    <property type="match status" value="1"/>
</dbReference>
<dbReference type="FunFam" id="2.120.10.30:FF:000028">
    <property type="entry name" value="Pro-epidermal growth factor"/>
    <property type="match status" value="1"/>
</dbReference>
<dbReference type="FunFam" id="2.120.10.30:FF:000036">
    <property type="entry name" value="Pro-epidermal growth factor"/>
    <property type="match status" value="1"/>
</dbReference>
<dbReference type="Gene3D" id="2.10.25.10">
    <property type="entry name" value="Laminin"/>
    <property type="match status" value="7"/>
</dbReference>
<dbReference type="Gene3D" id="2.120.10.30">
    <property type="entry name" value="TolB, C-terminal domain"/>
    <property type="match status" value="2"/>
</dbReference>
<dbReference type="InterPro" id="IPR011042">
    <property type="entry name" value="6-blade_b-propeller_TolB-like"/>
</dbReference>
<dbReference type="InterPro" id="IPR050778">
    <property type="entry name" value="Cueball_EGF_LRP_Nidogen"/>
</dbReference>
<dbReference type="InterPro" id="IPR001881">
    <property type="entry name" value="EGF-like_Ca-bd_dom"/>
</dbReference>
<dbReference type="InterPro" id="IPR000742">
    <property type="entry name" value="EGF-like_dom"/>
</dbReference>
<dbReference type="InterPro" id="IPR000152">
    <property type="entry name" value="EGF-type_Asp/Asn_hydroxyl_site"/>
</dbReference>
<dbReference type="InterPro" id="IPR018097">
    <property type="entry name" value="EGF_Ca-bd_CS"/>
</dbReference>
<dbReference type="InterPro" id="IPR009030">
    <property type="entry name" value="Growth_fac_rcpt_cys_sf"/>
</dbReference>
<dbReference type="InterPro" id="IPR000033">
    <property type="entry name" value="LDLR_classB_rpt"/>
</dbReference>
<dbReference type="InterPro" id="IPR049883">
    <property type="entry name" value="NOTCH1_EGF-like"/>
</dbReference>
<dbReference type="InterPro" id="IPR016317">
    <property type="entry name" value="Pro-epidermal_GF"/>
</dbReference>
<dbReference type="PANTHER" id="PTHR46513:SF5">
    <property type="entry name" value="PRO-EPIDERMAL GROWTH FACTOR"/>
    <property type="match status" value="1"/>
</dbReference>
<dbReference type="PANTHER" id="PTHR46513">
    <property type="entry name" value="VITELLOGENIN RECEPTOR-LIKE PROTEIN-RELATED-RELATED"/>
    <property type="match status" value="1"/>
</dbReference>
<dbReference type="Pfam" id="PF00008">
    <property type="entry name" value="EGF"/>
    <property type="match status" value="1"/>
</dbReference>
<dbReference type="Pfam" id="PF07645">
    <property type="entry name" value="EGF_CA"/>
    <property type="match status" value="2"/>
</dbReference>
<dbReference type="Pfam" id="PF14670">
    <property type="entry name" value="FXa_inhibition"/>
    <property type="match status" value="2"/>
</dbReference>
<dbReference type="Pfam" id="PF00058">
    <property type="entry name" value="Ldl_recept_b"/>
    <property type="match status" value="3"/>
</dbReference>
<dbReference type="PIRSF" id="PIRSF001778">
    <property type="entry name" value="Pro-epidermal_growth_factor"/>
    <property type="match status" value="1"/>
</dbReference>
<dbReference type="PRINTS" id="PR00009">
    <property type="entry name" value="EGFTGF"/>
</dbReference>
<dbReference type="SMART" id="SM00181">
    <property type="entry name" value="EGF"/>
    <property type="match status" value="8"/>
</dbReference>
<dbReference type="SMART" id="SM00179">
    <property type="entry name" value="EGF_CA"/>
    <property type="match status" value="5"/>
</dbReference>
<dbReference type="SMART" id="SM00135">
    <property type="entry name" value="LY"/>
    <property type="match status" value="8"/>
</dbReference>
<dbReference type="SUPFAM" id="SSF57196">
    <property type="entry name" value="EGF/Laminin"/>
    <property type="match status" value="2"/>
</dbReference>
<dbReference type="SUPFAM" id="SSF57184">
    <property type="entry name" value="Growth factor receptor domain"/>
    <property type="match status" value="2"/>
</dbReference>
<dbReference type="SUPFAM" id="SSF63825">
    <property type="entry name" value="YWTD domain"/>
    <property type="match status" value="2"/>
</dbReference>
<dbReference type="PROSITE" id="PS00010">
    <property type="entry name" value="ASX_HYDROXYL"/>
    <property type="match status" value="3"/>
</dbReference>
<dbReference type="PROSITE" id="PS00022">
    <property type="entry name" value="EGF_1"/>
    <property type="match status" value="1"/>
</dbReference>
<dbReference type="PROSITE" id="PS01186">
    <property type="entry name" value="EGF_2"/>
    <property type="match status" value="6"/>
</dbReference>
<dbReference type="PROSITE" id="PS50026">
    <property type="entry name" value="EGF_3"/>
    <property type="match status" value="5"/>
</dbReference>
<dbReference type="PROSITE" id="PS01187">
    <property type="entry name" value="EGF_CA"/>
    <property type="match status" value="3"/>
</dbReference>
<dbReference type="PROSITE" id="PS51120">
    <property type="entry name" value="LDLRB"/>
    <property type="match status" value="9"/>
</dbReference>
<reference key="1">
    <citation type="journal article" date="1992" name="DNA Cell Biol.">
        <title>Cloning and sequencing of the rat preproepidermal growth factor cDNA: comparison with mouse and human sequences.</title>
        <authorList>
            <person name="Price P.M."/>
            <person name="Saggi S.J."/>
            <person name="Safirstein R."/>
        </authorList>
    </citation>
    <scope>NUCLEOTIDE SEQUENCE [MRNA]</scope>
    <source>
        <tissue>Kidney</tissue>
    </source>
</reference>
<reference key="2">
    <citation type="submission" date="1994-01" db="EMBL/GenBank/DDBJ databases">
        <authorList>
            <person name="Price P.M."/>
        </authorList>
    </citation>
    <scope>SEQUENCE REVISION</scope>
    <source>
        <tissue>Kidney</tissue>
    </source>
</reference>
<reference key="3">
    <citation type="journal article" date="1985" name="Eur. J. Biochem.">
        <title>Rat epidermal growth factor: complete amino acid sequence. Homology with the corresponding murine and human proteins; isolation of a form truncated at both ends with full in vitro biological activity.</title>
        <authorList>
            <person name="Simpson R.J."/>
            <person name="Smith J.A."/>
            <person name="Moritz R.L."/>
            <person name="O'Hare M.J."/>
            <person name="Rudland P.S."/>
            <person name="Morrison J.R."/>
            <person name="Lloyd C.J."/>
            <person name="Grego B."/>
            <person name="Burgess A.W."/>
            <person name="Nice E.C."/>
        </authorList>
    </citation>
    <scope>PROTEIN SEQUENCE OF 974-1021</scope>
</reference>
<reference key="4">
    <citation type="journal article" date="1988" name="Nucleic Acids Res.">
        <title>Cloning and sequence analysis of a cDNA for rat epidermal growth factor.</title>
        <authorList>
            <person name="Dorow D.S."/>
            <person name="Simpson R.J."/>
        </authorList>
    </citation>
    <scope>NUCLEOTIDE SEQUENCE [MRNA] OF 994-1133</scope>
    <source>
        <strain>Sprague-Dawley</strain>
        <tissue>Kidney</tissue>
    </source>
</reference>
<protein>
    <recommendedName>
        <fullName>Pro-epidermal growth factor</fullName>
        <shortName>EGF</shortName>
    </recommendedName>
    <component>
        <recommendedName>
            <fullName>Epidermal growth factor</fullName>
        </recommendedName>
    </component>
</protein>
<comment type="function">
    <text evidence="1">EGF stimulates the growth of various epidermal and epithelial tissues in vivo and in vitro and of some fibroblasts in cell culture. Magnesiotropic hormone that stimulates magnesium reabsorption in the renal distal convoluted tubule via engagement of EGFR and activation of the magnesium channel TRPM6 (By similarity).</text>
</comment>
<comment type="subunit">
    <text evidence="1">Interacts with EGFR and promotes EGFR dimerization. Interacts with RHBDF1; may retain EGF in the endoplasmic reticulum and regulates its degradation through the endoplasmic reticulum-associated degradation (ERAD) (By similarity). Interacts with RHBDF2 (By similarity).</text>
</comment>
<comment type="subcellular location">
    <subcellularLocation>
        <location>Membrane</location>
        <topology>Single-pass type I membrane protein</topology>
    </subcellularLocation>
</comment>
<proteinExistence type="evidence at protein level"/>
<sequence length="1133" mass="124126">MLFSLTFLSVFLKITVLSVTAQQTRNCQSGPLERSGTTTYAAAGPPRFLIFLQGNSIFRINTDGTNHQQLVVDAGVSVVMDFHYKEERLYWVDLERQLLQRVFFNGSGQETVCKVDKNVSGLAINWIDGEILRTDRWKGVITVTDMNGNNSRVLLSSLKRPANILVDPTERLIFWSSVVTGNLHRADLGGMDVKTLLEAPERISVLILDILDKRLFWAQDGREGSHGYIHSCDYNGGSIHHIRHQARHDLLTMAIFGDKILYSALKEKAIWIADKHTGKNVVRVNLDPASVPPRELRVVHLHAQPGTENRAQASDSERCKQRRGQCLYSLSERDPNSDSSACAEGYTLSRDRKYCEDVNECALQNHGCTLGCENIPGSYYCTCPTGFVLLPDGKRCHELVACPGNRSECSHDCILTSDGPLCICPAGSVLGKDGKTCTGCSFSDNGGCSQICLPLSLASWECDCFPGYDLQLDRKSCAASMGPQPFLLFANSQDIRHMHFDGTDYKTLLSRQMGMVFALDYDPVESKIYFAQTALKWIERANLDGSQRERRITEGVDTPEGLAVDWIGRRIYWTDSGKSVIEGSDLSGKHHQIIIKESISRPRGIAVHPKARRLFWTDTGMSPRIESSSLQGSDRTLIASSNLLEPSGIAIDYLTDTLYWCDTKLSVIEMADLDGSKRRRLTQNDVGHPFSLAVFEDHVWFSDWAIPSVIRVNKRTGQNRVRLRGSMLKPSSLVVVHPLAKPGADPCLHRNGGCEHICQESLGTAQCLCREGFVKAPDGKMCLTRKDDQILAGDNADLSKEVASLDNSPKAYVPDDDRTESSTLVAEIMVSGLNYEDDCGPGGCGSHAHCISEGEAAVCQCLKGFAGDGNLCSDIDECELGSSDCPPTSSRCINTEGGYVCQCSEGYEGDGIYCLDVDECQQGSHGCSENATCTNTEGGYNCTCAGCPSAPGLPCPDSTSPSLLGKDGCHWVRNSNTGCPPSYDGYCLNGGVCMYVESVDRYVCNCVIGYIGERCQHRDLRWWKLRHADYGQRHDITVVSVCVVALALLLLLGMWGTYYYRTRKQLSESSKKPSEESSSNVSSNGPDSSGAGVSSGPQPWFVVLEEHQQPKNGRLPAAGTNGAVVEAGLSSSL</sequence>
<feature type="signal peptide" evidence="2">
    <location>
        <begin position="1"/>
        <end position="21"/>
    </location>
</feature>
<feature type="chain" id="PRO_0000007546" description="Pro-epidermal growth factor">
    <location>
        <begin position="22"/>
        <end position="1133"/>
    </location>
</feature>
<feature type="chain" id="PRO_0000007547" description="Epidermal growth factor">
    <location>
        <begin position="974"/>
        <end position="1026"/>
    </location>
</feature>
<feature type="topological domain" description="Extracellular" evidence="2">
    <location>
        <begin position="22"/>
        <end position="1035"/>
    </location>
</feature>
<feature type="transmembrane region" description="Helical" evidence="2">
    <location>
        <begin position="1036"/>
        <end position="1057"/>
    </location>
</feature>
<feature type="topological domain" description="Cytoplasmic" evidence="2">
    <location>
        <begin position="1058"/>
        <end position="1133"/>
    </location>
</feature>
<feature type="repeat" description="LDL-receptor class B 1">
    <location>
        <begin position="87"/>
        <end position="128"/>
    </location>
</feature>
<feature type="repeat" description="LDL-receptor class B 2">
    <location>
        <begin position="129"/>
        <end position="170"/>
    </location>
</feature>
<feature type="repeat" description="LDL-receptor class B 3">
    <location>
        <begin position="171"/>
        <end position="212"/>
    </location>
</feature>
<feature type="repeat" description="LDL-receptor class B 4">
    <location>
        <begin position="213"/>
        <end position="259"/>
    </location>
</feature>
<feature type="domain" description="EGF-like 1; incomplete" evidence="3">
    <location>
        <begin position="322"/>
        <end position="356"/>
    </location>
</feature>
<feature type="domain" description="EGF-like 2; calcium-binding" evidence="3">
    <location>
        <begin position="357"/>
        <end position="397"/>
    </location>
</feature>
<feature type="domain" description="EGF-like 3" evidence="3">
    <location>
        <begin position="398"/>
        <end position="438"/>
    </location>
</feature>
<feature type="domain" description="EGF-like 4" evidence="3">
    <location>
        <begin position="436"/>
        <end position="478"/>
    </location>
</feature>
<feature type="repeat" description="LDL-receptor class B 5">
    <location>
        <begin position="485"/>
        <end position="525"/>
    </location>
</feature>
<feature type="repeat" description="LDL-receptor class B 6">
    <location>
        <begin position="526"/>
        <end position="568"/>
    </location>
</feature>
<feature type="repeat" description="LDL-receptor class B 7">
    <location>
        <begin position="569"/>
        <end position="611"/>
    </location>
</feature>
<feature type="repeat" description="LDL-receptor class B 8">
    <location>
        <begin position="612"/>
        <end position="655"/>
    </location>
</feature>
<feature type="repeat" description="LDL-receptor class B 9">
    <location>
        <begin position="656"/>
        <end position="698"/>
    </location>
</feature>
<feature type="domain" description="EGF-like 5" evidence="3">
    <location>
        <begin position="743"/>
        <end position="783"/>
    </location>
</feature>
<feature type="domain" description="EGF-like 6" evidence="3">
    <location>
        <begin position="835"/>
        <end position="873"/>
    </location>
</feature>
<feature type="domain" description="EGF-like 7; calcium-binding" evidence="3">
    <location>
        <begin position="874"/>
        <end position="915"/>
    </location>
</feature>
<feature type="domain" description="EGF-like 8; calcium-binding" evidence="3">
    <location>
        <begin position="916"/>
        <end position="956"/>
    </location>
</feature>
<feature type="domain" description="EGF-like 9" evidence="3">
    <location>
        <begin position="975"/>
        <end position="1016"/>
    </location>
</feature>
<feature type="region of interest" description="Disordered" evidence="4">
    <location>
        <begin position="1069"/>
        <end position="1097"/>
    </location>
</feature>
<feature type="compositionally biased region" description="Low complexity" evidence="4">
    <location>
        <begin position="1076"/>
        <end position="1090"/>
    </location>
</feature>
<feature type="glycosylation site" description="N-linked (GlcNAc...) asparagine" evidence="2">
    <location>
        <position position="105"/>
    </location>
</feature>
<feature type="glycosylation site" description="N-linked (GlcNAc...) asparagine" evidence="2">
    <location>
        <position position="118"/>
    </location>
</feature>
<feature type="glycosylation site" description="N-linked (GlcNAc...) asparagine" evidence="2">
    <location>
        <position position="149"/>
    </location>
</feature>
<feature type="glycosylation site" description="N-linked (GlcNAc...) asparagine" evidence="2">
    <location>
        <position position="405"/>
    </location>
</feature>
<feature type="glycosylation site" description="N-linked (GlcNAc...) asparagine" evidence="2">
    <location>
        <position position="930"/>
    </location>
</feature>
<feature type="glycosylation site" description="N-linked (GlcNAc...) asparagine" evidence="2">
    <location>
        <position position="941"/>
    </location>
</feature>
<feature type="disulfide bond" evidence="3">
    <location>
        <begin position="361"/>
        <end position="372"/>
    </location>
</feature>
<feature type="disulfide bond" evidence="3">
    <location>
        <begin position="368"/>
        <end position="381"/>
    </location>
</feature>
<feature type="disulfide bond" evidence="3">
    <location>
        <begin position="383"/>
        <end position="396"/>
    </location>
</feature>
<feature type="disulfide bond" evidence="3">
    <location>
        <begin position="402"/>
        <end position="413"/>
    </location>
</feature>
<feature type="disulfide bond" evidence="3">
    <location>
        <begin position="409"/>
        <end position="422"/>
    </location>
</feature>
<feature type="disulfide bond" evidence="3">
    <location>
        <begin position="424"/>
        <end position="437"/>
    </location>
</feature>
<feature type="disulfide bond" evidence="3">
    <location>
        <begin position="440"/>
        <end position="452"/>
    </location>
</feature>
<feature type="disulfide bond" evidence="3">
    <location>
        <begin position="448"/>
        <end position="462"/>
    </location>
</feature>
<feature type="disulfide bond" evidence="3">
    <location>
        <begin position="464"/>
        <end position="477"/>
    </location>
</feature>
<feature type="disulfide bond" evidence="3">
    <location>
        <begin position="747"/>
        <end position="758"/>
    </location>
</feature>
<feature type="disulfide bond" evidence="3">
    <location>
        <begin position="754"/>
        <end position="767"/>
    </location>
</feature>
<feature type="disulfide bond" evidence="3">
    <location>
        <begin position="769"/>
        <end position="782"/>
    </location>
</feature>
<feature type="disulfide bond" evidence="3">
    <location>
        <begin position="839"/>
        <end position="850"/>
    </location>
</feature>
<feature type="disulfide bond" evidence="3">
    <location>
        <begin position="844"/>
        <end position="859"/>
    </location>
</feature>
<feature type="disulfide bond" evidence="3">
    <location>
        <begin position="861"/>
        <end position="872"/>
    </location>
</feature>
<feature type="disulfide bond" evidence="3">
    <location>
        <begin position="878"/>
        <end position="892"/>
    </location>
</feature>
<feature type="disulfide bond" evidence="3">
    <location>
        <begin position="885"/>
        <end position="901"/>
    </location>
</feature>
<feature type="disulfide bond" evidence="3">
    <location>
        <begin position="903"/>
        <end position="914"/>
    </location>
</feature>
<feature type="disulfide bond" evidence="3">
    <location>
        <begin position="920"/>
        <end position="933"/>
    </location>
</feature>
<feature type="disulfide bond" evidence="3">
    <location>
        <begin position="927"/>
        <end position="942"/>
    </location>
</feature>
<feature type="disulfide bond" evidence="3">
    <location>
        <begin position="944"/>
        <end position="955"/>
    </location>
</feature>
<feature type="disulfide bond">
    <location>
        <begin position="979"/>
        <end position="993"/>
    </location>
</feature>
<feature type="disulfide bond">
    <location>
        <begin position="987"/>
        <end position="1004"/>
    </location>
</feature>
<feature type="disulfide bond">
    <location>
        <begin position="1006"/>
        <end position="1015"/>
    </location>
</feature>
<feature type="sequence variant">
    <original>C</original>
    <variation>V</variation>
    <location>
        <position position="955"/>
    </location>
</feature>
<feature type="sequence conflict" description="In Ref. 4; CAA31241." evidence="5" ref="4">
    <original>KL</original>
    <variation>NW</variation>
    <location>
        <begin position="1024"/>
        <end position="1025"/>
    </location>
</feature>
<feature type="sequence conflict" description="In Ref. 4; CAA31241." evidence="5" ref="4">
    <original>QPKNGRLPAAGTNGAVVEAGLSSSL</original>
    <variation>SGAGVSSGPQPWFVVLEEHQ</variation>
    <location>
        <begin position="1109"/>
        <end position="1133"/>
    </location>
</feature>